<accession>C0MEL9</accession>
<protein>
    <recommendedName>
        <fullName evidence="1">Small ribosomal subunit protein bS18</fullName>
    </recommendedName>
    <alternativeName>
        <fullName evidence="2">30S ribosomal protein S18</fullName>
    </alternativeName>
</protein>
<comment type="function">
    <text evidence="1">Binds as a heterodimer with protein bS6 to the central domain of the 16S rRNA, where it helps stabilize the platform of the 30S subunit.</text>
</comment>
<comment type="subunit">
    <text evidence="1">Part of the 30S ribosomal subunit. Forms a tight heterodimer with protein bS6.</text>
</comment>
<comment type="similarity">
    <text evidence="1">Belongs to the bacterial ribosomal protein bS18 family.</text>
</comment>
<sequence length="79" mass="9204">MAQQRRGGFKRRKKVDFIAANKIEYVDYKDTELLSRFVSERGKILPRRVTGTSAKNQRKVTTAIKRARVMALMPYVNED</sequence>
<dbReference type="EMBL" id="FM204884">
    <property type="protein sequence ID" value="CAX00375.1"/>
    <property type="molecule type" value="Genomic_DNA"/>
</dbReference>
<dbReference type="SMR" id="C0MEL9"/>
<dbReference type="KEGG" id="seq:SZO_16300"/>
<dbReference type="eggNOG" id="COG0238">
    <property type="taxonomic scope" value="Bacteria"/>
</dbReference>
<dbReference type="HOGENOM" id="CLU_148710_2_2_9"/>
<dbReference type="Proteomes" id="UP000001368">
    <property type="component" value="Chromosome"/>
</dbReference>
<dbReference type="GO" id="GO:0022627">
    <property type="term" value="C:cytosolic small ribosomal subunit"/>
    <property type="evidence" value="ECO:0007669"/>
    <property type="project" value="TreeGrafter"/>
</dbReference>
<dbReference type="GO" id="GO:0070181">
    <property type="term" value="F:small ribosomal subunit rRNA binding"/>
    <property type="evidence" value="ECO:0007669"/>
    <property type="project" value="TreeGrafter"/>
</dbReference>
<dbReference type="GO" id="GO:0003735">
    <property type="term" value="F:structural constituent of ribosome"/>
    <property type="evidence" value="ECO:0007669"/>
    <property type="project" value="InterPro"/>
</dbReference>
<dbReference type="GO" id="GO:0006412">
    <property type="term" value="P:translation"/>
    <property type="evidence" value="ECO:0007669"/>
    <property type="project" value="UniProtKB-UniRule"/>
</dbReference>
<dbReference type="FunFam" id="4.10.640.10:FF:000003">
    <property type="entry name" value="30S ribosomal protein S18"/>
    <property type="match status" value="1"/>
</dbReference>
<dbReference type="Gene3D" id="4.10.640.10">
    <property type="entry name" value="Ribosomal protein S18"/>
    <property type="match status" value="1"/>
</dbReference>
<dbReference type="HAMAP" id="MF_00270">
    <property type="entry name" value="Ribosomal_bS18"/>
    <property type="match status" value="1"/>
</dbReference>
<dbReference type="InterPro" id="IPR001648">
    <property type="entry name" value="Ribosomal_bS18"/>
</dbReference>
<dbReference type="InterPro" id="IPR018275">
    <property type="entry name" value="Ribosomal_bS18_CS"/>
</dbReference>
<dbReference type="InterPro" id="IPR036870">
    <property type="entry name" value="Ribosomal_bS18_sf"/>
</dbReference>
<dbReference type="NCBIfam" id="TIGR00165">
    <property type="entry name" value="S18"/>
    <property type="match status" value="1"/>
</dbReference>
<dbReference type="PANTHER" id="PTHR13479">
    <property type="entry name" value="30S RIBOSOMAL PROTEIN S18"/>
    <property type="match status" value="1"/>
</dbReference>
<dbReference type="PANTHER" id="PTHR13479:SF40">
    <property type="entry name" value="SMALL RIBOSOMAL SUBUNIT PROTEIN BS18M"/>
    <property type="match status" value="1"/>
</dbReference>
<dbReference type="Pfam" id="PF01084">
    <property type="entry name" value="Ribosomal_S18"/>
    <property type="match status" value="1"/>
</dbReference>
<dbReference type="PRINTS" id="PR00974">
    <property type="entry name" value="RIBOSOMALS18"/>
</dbReference>
<dbReference type="SUPFAM" id="SSF46911">
    <property type="entry name" value="Ribosomal protein S18"/>
    <property type="match status" value="1"/>
</dbReference>
<dbReference type="PROSITE" id="PS00057">
    <property type="entry name" value="RIBOSOMAL_S18"/>
    <property type="match status" value="1"/>
</dbReference>
<feature type="chain" id="PRO_1000204737" description="Small ribosomal subunit protein bS18">
    <location>
        <begin position="1"/>
        <end position="79"/>
    </location>
</feature>
<organism>
    <name type="scientific">Streptococcus equi subsp. zooepidemicus (strain H70)</name>
    <dbReference type="NCBI Taxonomy" id="553483"/>
    <lineage>
        <taxon>Bacteria</taxon>
        <taxon>Bacillati</taxon>
        <taxon>Bacillota</taxon>
        <taxon>Bacilli</taxon>
        <taxon>Lactobacillales</taxon>
        <taxon>Streptococcaceae</taxon>
        <taxon>Streptococcus</taxon>
    </lineage>
</organism>
<gene>
    <name evidence="1" type="primary">rpsR</name>
    <name type="ordered locus">SZO_16300</name>
</gene>
<evidence type="ECO:0000255" key="1">
    <source>
        <dbReference type="HAMAP-Rule" id="MF_00270"/>
    </source>
</evidence>
<evidence type="ECO:0000305" key="2"/>
<reference key="1">
    <citation type="journal article" date="2009" name="PLoS Pathog.">
        <title>Genomic evidence for the evolution of Streptococcus equi: host restriction, increased virulence, and genetic exchange with human pathogens.</title>
        <authorList>
            <person name="Holden M.T.G."/>
            <person name="Heather Z."/>
            <person name="Paillot R."/>
            <person name="Steward K.F."/>
            <person name="Webb K."/>
            <person name="Ainslie F."/>
            <person name="Jourdan T."/>
            <person name="Bason N.C."/>
            <person name="Holroyd N.E."/>
            <person name="Mungall K."/>
            <person name="Quail M.A."/>
            <person name="Sanders M."/>
            <person name="Simmonds M."/>
            <person name="Willey D."/>
            <person name="Brooks K."/>
            <person name="Aanensen D.M."/>
            <person name="Spratt B.G."/>
            <person name="Jolley K.A."/>
            <person name="Maiden M.C.J."/>
            <person name="Kehoe M."/>
            <person name="Chanter N."/>
            <person name="Bentley S.D."/>
            <person name="Robinson C."/>
            <person name="Maskell D.J."/>
            <person name="Parkhill J."/>
            <person name="Waller A.S."/>
        </authorList>
    </citation>
    <scope>NUCLEOTIDE SEQUENCE [LARGE SCALE GENOMIC DNA]</scope>
    <source>
        <strain>H70</strain>
    </source>
</reference>
<keyword id="KW-0687">Ribonucleoprotein</keyword>
<keyword id="KW-0689">Ribosomal protein</keyword>
<keyword id="KW-0694">RNA-binding</keyword>
<keyword id="KW-0699">rRNA-binding</keyword>
<proteinExistence type="inferred from homology"/>
<name>RS18_STRS7</name>